<organism>
    <name type="scientific">Lactobacillus gasseri (strain ATCC 33323 / DSM 20243 / BCRC 14619 / CIP 102991 / JCM 1131 / KCTC 3163 / NCIMB 11718 / NCTC 13722 / AM63)</name>
    <dbReference type="NCBI Taxonomy" id="324831"/>
    <lineage>
        <taxon>Bacteria</taxon>
        <taxon>Bacillati</taxon>
        <taxon>Bacillota</taxon>
        <taxon>Bacilli</taxon>
        <taxon>Lactobacillales</taxon>
        <taxon>Lactobacillaceae</taxon>
        <taxon>Lactobacillus</taxon>
    </lineage>
</organism>
<proteinExistence type="inferred from homology"/>
<feature type="chain" id="PRO_0000356503" description="Large ribosomal subunit protein bL33B">
    <location>
        <begin position="1"/>
        <end position="49"/>
    </location>
</feature>
<protein>
    <recommendedName>
        <fullName evidence="1">Large ribosomal subunit protein bL33B</fullName>
    </recommendedName>
    <alternativeName>
        <fullName evidence="1">50S ribosomal protein L33 2</fullName>
    </alternativeName>
</protein>
<comment type="similarity">
    <text evidence="1">Belongs to the bacterial ribosomal protein bL33 family.</text>
</comment>
<comment type="sequence caution" evidence="2">
    <conflict type="erroneous initiation">
        <sequence resource="EMBL-CDS" id="ABJ60748"/>
    </conflict>
    <text>Extended N-terminus.</text>
</comment>
<sequence>MAEHIILECTECGDRSYLSEKNKRKHPERLALKKYCPVERKVTLHRETK</sequence>
<reference key="1">
    <citation type="journal article" date="2006" name="Proc. Natl. Acad. Sci. U.S.A.">
        <title>Comparative genomics of the lactic acid bacteria.</title>
        <authorList>
            <person name="Makarova K.S."/>
            <person name="Slesarev A."/>
            <person name="Wolf Y.I."/>
            <person name="Sorokin A."/>
            <person name="Mirkin B."/>
            <person name="Koonin E.V."/>
            <person name="Pavlov A."/>
            <person name="Pavlova N."/>
            <person name="Karamychev V."/>
            <person name="Polouchine N."/>
            <person name="Shakhova V."/>
            <person name="Grigoriev I."/>
            <person name="Lou Y."/>
            <person name="Rohksar D."/>
            <person name="Lucas S."/>
            <person name="Huang K."/>
            <person name="Goodstein D.M."/>
            <person name="Hawkins T."/>
            <person name="Plengvidhya V."/>
            <person name="Welker D."/>
            <person name="Hughes J."/>
            <person name="Goh Y."/>
            <person name="Benson A."/>
            <person name="Baldwin K."/>
            <person name="Lee J.-H."/>
            <person name="Diaz-Muniz I."/>
            <person name="Dosti B."/>
            <person name="Smeianov V."/>
            <person name="Wechter W."/>
            <person name="Barabote R."/>
            <person name="Lorca G."/>
            <person name="Altermann E."/>
            <person name="Barrangou R."/>
            <person name="Ganesan B."/>
            <person name="Xie Y."/>
            <person name="Rawsthorne H."/>
            <person name="Tamir D."/>
            <person name="Parker C."/>
            <person name="Breidt F."/>
            <person name="Broadbent J.R."/>
            <person name="Hutkins R."/>
            <person name="O'Sullivan D."/>
            <person name="Steele J."/>
            <person name="Unlu G."/>
            <person name="Saier M.H. Jr."/>
            <person name="Klaenhammer T."/>
            <person name="Richardson P."/>
            <person name="Kozyavkin S."/>
            <person name="Weimer B.C."/>
            <person name="Mills D.A."/>
        </authorList>
    </citation>
    <scope>NUCLEOTIDE SEQUENCE [LARGE SCALE GENOMIC DNA]</scope>
    <source>
        <strain>ATCC 33323 / DSM 20243 / BCRC 14619 / CIP 102991 / JCM 1131 / KCTC 3163 / NCIMB 11718 / NCTC 13722 / AM63</strain>
    </source>
</reference>
<dbReference type="EMBL" id="CP000413">
    <property type="protein sequence ID" value="ABJ60748.1"/>
    <property type="status" value="ALT_INIT"/>
    <property type="molecule type" value="Genomic_DNA"/>
</dbReference>
<dbReference type="SMR" id="Q041X4"/>
<dbReference type="KEGG" id="lga:LGAS_1386"/>
<dbReference type="HOGENOM" id="CLU_190949_0_2_9"/>
<dbReference type="BioCyc" id="LGAS324831:G1G6Y-1380-MONOMER"/>
<dbReference type="Proteomes" id="UP000000664">
    <property type="component" value="Chromosome"/>
</dbReference>
<dbReference type="GO" id="GO:0005737">
    <property type="term" value="C:cytoplasm"/>
    <property type="evidence" value="ECO:0007669"/>
    <property type="project" value="UniProtKB-ARBA"/>
</dbReference>
<dbReference type="GO" id="GO:1990904">
    <property type="term" value="C:ribonucleoprotein complex"/>
    <property type="evidence" value="ECO:0007669"/>
    <property type="project" value="UniProtKB-KW"/>
</dbReference>
<dbReference type="GO" id="GO:0005840">
    <property type="term" value="C:ribosome"/>
    <property type="evidence" value="ECO:0007669"/>
    <property type="project" value="UniProtKB-KW"/>
</dbReference>
<dbReference type="GO" id="GO:0003735">
    <property type="term" value="F:structural constituent of ribosome"/>
    <property type="evidence" value="ECO:0007669"/>
    <property type="project" value="InterPro"/>
</dbReference>
<dbReference type="GO" id="GO:0006412">
    <property type="term" value="P:translation"/>
    <property type="evidence" value="ECO:0007669"/>
    <property type="project" value="UniProtKB-UniRule"/>
</dbReference>
<dbReference type="Gene3D" id="2.20.28.120">
    <property type="entry name" value="Ribosomal protein L33"/>
    <property type="match status" value="1"/>
</dbReference>
<dbReference type="HAMAP" id="MF_00294">
    <property type="entry name" value="Ribosomal_bL33"/>
    <property type="match status" value="1"/>
</dbReference>
<dbReference type="InterPro" id="IPR001705">
    <property type="entry name" value="Ribosomal_bL33"/>
</dbReference>
<dbReference type="InterPro" id="IPR018264">
    <property type="entry name" value="Ribosomal_bL33_CS"/>
</dbReference>
<dbReference type="InterPro" id="IPR038584">
    <property type="entry name" value="Ribosomal_bL33_sf"/>
</dbReference>
<dbReference type="InterPro" id="IPR011332">
    <property type="entry name" value="Ribosomal_zn-bd"/>
</dbReference>
<dbReference type="NCBIfam" id="NF001764">
    <property type="entry name" value="PRK00504.1"/>
    <property type="match status" value="1"/>
</dbReference>
<dbReference type="NCBIfam" id="NF001860">
    <property type="entry name" value="PRK00595.1"/>
    <property type="match status" value="1"/>
</dbReference>
<dbReference type="NCBIfam" id="TIGR01023">
    <property type="entry name" value="rpmG_bact"/>
    <property type="match status" value="1"/>
</dbReference>
<dbReference type="PANTHER" id="PTHR43168">
    <property type="entry name" value="50S RIBOSOMAL PROTEIN L33, CHLOROPLASTIC"/>
    <property type="match status" value="1"/>
</dbReference>
<dbReference type="PANTHER" id="PTHR43168:SF2">
    <property type="entry name" value="LARGE RIBOSOMAL SUBUNIT PROTEIN BL33C"/>
    <property type="match status" value="1"/>
</dbReference>
<dbReference type="Pfam" id="PF00471">
    <property type="entry name" value="Ribosomal_L33"/>
    <property type="match status" value="1"/>
</dbReference>
<dbReference type="SUPFAM" id="SSF57829">
    <property type="entry name" value="Zn-binding ribosomal proteins"/>
    <property type="match status" value="1"/>
</dbReference>
<dbReference type="PROSITE" id="PS00582">
    <property type="entry name" value="RIBOSOMAL_L33"/>
    <property type="match status" value="1"/>
</dbReference>
<name>RL332_LACGA</name>
<evidence type="ECO:0000255" key="1">
    <source>
        <dbReference type="HAMAP-Rule" id="MF_00294"/>
    </source>
</evidence>
<evidence type="ECO:0000305" key="2"/>
<gene>
    <name evidence="1" type="primary">rpmG2</name>
    <name type="ordered locus">LGAS_1386</name>
</gene>
<keyword id="KW-0687">Ribonucleoprotein</keyword>
<keyword id="KW-0689">Ribosomal protein</keyword>
<accession>Q041X4</accession>